<proteinExistence type="inferred from homology"/>
<comment type="catalytic activity">
    <reaction evidence="1">
        <text>S-adenosyl-L-methionine + a thiopurine = S-adenosyl-L-homocysteine + a thiopurine S-methylether.</text>
        <dbReference type="EC" id="2.1.1.67"/>
    </reaction>
</comment>
<comment type="subcellular location">
    <subcellularLocation>
        <location evidence="1">Cytoplasm</location>
    </subcellularLocation>
</comment>
<comment type="similarity">
    <text evidence="1">Belongs to the class I-like SAM-binding methyltransferase superfamily. TPMT family.</text>
</comment>
<name>TPMT_LEGPA</name>
<reference key="1">
    <citation type="journal article" date="2004" name="Nat. Genet.">
        <title>Evidence in the Legionella pneumophila genome for exploitation of host cell functions and high genome plasticity.</title>
        <authorList>
            <person name="Cazalet C."/>
            <person name="Rusniok C."/>
            <person name="Brueggemann H."/>
            <person name="Zidane N."/>
            <person name="Magnier A."/>
            <person name="Ma L."/>
            <person name="Tichit M."/>
            <person name="Jarraud S."/>
            <person name="Bouchier C."/>
            <person name="Vandenesch F."/>
            <person name="Kunst F."/>
            <person name="Etienne J."/>
            <person name="Glaser P."/>
            <person name="Buchrieser C."/>
        </authorList>
    </citation>
    <scope>NUCLEOTIDE SEQUENCE [LARGE SCALE GENOMIC DNA]</scope>
    <source>
        <strain>Paris</strain>
    </source>
</reference>
<keyword id="KW-0963">Cytoplasm</keyword>
<keyword id="KW-0489">Methyltransferase</keyword>
<keyword id="KW-0949">S-adenosyl-L-methionine</keyword>
<keyword id="KW-0808">Transferase</keyword>
<protein>
    <recommendedName>
        <fullName evidence="1">Thiopurine S-methyltransferase</fullName>
        <ecNumber evidence="1">2.1.1.67</ecNumber>
    </recommendedName>
    <alternativeName>
        <fullName evidence="1">Thiopurine methyltransferase</fullName>
    </alternativeName>
</protein>
<feature type="chain" id="PRO_0000220121" description="Thiopurine S-methyltransferase">
    <location>
        <begin position="1"/>
        <end position="221"/>
    </location>
</feature>
<feature type="binding site" evidence="1">
    <location>
        <position position="12"/>
    </location>
    <ligand>
        <name>S-adenosyl-L-methionine</name>
        <dbReference type="ChEBI" id="CHEBI:59789"/>
    </ligand>
</feature>
<feature type="binding site" evidence="1">
    <location>
        <position position="47"/>
    </location>
    <ligand>
        <name>S-adenosyl-L-methionine</name>
        <dbReference type="ChEBI" id="CHEBI:59789"/>
    </ligand>
</feature>
<feature type="binding site" evidence="1">
    <location>
        <position position="68"/>
    </location>
    <ligand>
        <name>S-adenosyl-L-methionine</name>
        <dbReference type="ChEBI" id="CHEBI:59789"/>
    </ligand>
</feature>
<feature type="binding site" evidence="1">
    <location>
        <position position="125"/>
    </location>
    <ligand>
        <name>S-adenosyl-L-methionine</name>
        <dbReference type="ChEBI" id="CHEBI:59789"/>
    </ligand>
</feature>
<gene>
    <name evidence="1" type="primary">tpm</name>
    <name type="ordered locus">lpp2892</name>
</gene>
<sequence>MNKGQYFWNELWCEGRISFHKEEVNPDLIAYVSSLNIPAKGRVLVPLCGKSVDMLWLVRQGYHVVGIELVEKAILQFVQEHQITVRENTIGQAKQYFTDNLNLWVTDIFALNSALIEPVDAIYDRAALVALPKKLRPAYVDICLKWLKPGGSILLKTLQYNQEKVQGPPYSVSPEEIALSYQQCAKIELLKSQKRIQEPNDHLFNLGISEVNDYVWCIRKG</sequence>
<organism>
    <name type="scientific">Legionella pneumophila (strain Paris)</name>
    <dbReference type="NCBI Taxonomy" id="297246"/>
    <lineage>
        <taxon>Bacteria</taxon>
        <taxon>Pseudomonadati</taxon>
        <taxon>Pseudomonadota</taxon>
        <taxon>Gammaproteobacteria</taxon>
        <taxon>Legionellales</taxon>
        <taxon>Legionellaceae</taxon>
        <taxon>Legionella</taxon>
    </lineage>
</organism>
<accession>Q5X154</accession>
<dbReference type="EC" id="2.1.1.67" evidence="1"/>
<dbReference type="EMBL" id="CR628336">
    <property type="protein sequence ID" value="CAH14045.1"/>
    <property type="molecule type" value="Genomic_DNA"/>
</dbReference>
<dbReference type="RefSeq" id="WP_015961843.1">
    <property type="nucleotide sequence ID" value="NC_006368.1"/>
</dbReference>
<dbReference type="SMR" id="Q5X154"/>
<dbReference type="KEGG" id="lpp:lpp2892"/>
<dbReference type="LegioList" id="lpp2892"/>
<dbReference type="HOGENOM" id="CLU_085515_1_0_6"/>
<dbReference type="GO" id="GO:0005737">
    <property type="term" value="C:cytoplasm"/>
    <property type="evidence" value="ECO:0007669"/>
    <property type="project" value="UniProtKB-SubCell"/>
</dbReference>
<dbReference type="GO" id="GO:0008119">
    <property type="term" value="F:thiopurine S-methyltransferase activity"/>
    <property type="evidence" value="ECO:0007669"/>
    <property type="project" value="UniProtKB-UniRule"/>
</dbReference>
<dbReference type="GO" id="GO:0032259">
    <property type="term" value="P:methylation"/>
    <property type="evidence" value="ECO:0007669"/>
    <property type="project" value="UniProtKB-KW"/>
</dbReference>
<dbReference type="GO" id="GO:0010038">
    <property type="term" value="P:response to metal ion"/>
    <property type="evidence" value="ECO:0007669"/>
    <property type="project" value="InterPro"/>
</dbReference>
<dbReference type="CDD" id="cd02440">
    <property type="entry name" value="AdoMet_MTases"/>
    <property type="match status" value="1"/>
</dbReference>
<dbReference type="FunFam" id="3.40.50.150:FF:000101">
    <property type="entry name" value="Thiopurine S-methyltransferase"/>
    <property type="match status" value="1"/>
</dbReference>
<dbReference type="Gene3D" id="3.40.50.150">
    <property type="entry name" value="Vaccinia Virus protein VP39"/>
    <property type="match status" value="1"/>
</dbReference>
<dbReference type="HAMAP" id="MF_00812">
    <property type="entry name" value="Thiopur_methtran"/>
    <property type="match status" value="1"/>
</dbReference>
<dbReference type="InterPro" id="IPR029063">
    <property type="entry name" value="SAM-dependent_MTases_sf"/>
</dbReference>
<dbReference type="InterPro" id="IPR022474">
    <property type="entry name" value="Thiopur_S-MeTfrase_Se/Te_detox"/>
</dbReference>
<dbReference type="InterPro" id="IPR025835">
    <property type="entry name" value="Thiopurine_S-MeTrfase"/>
</dbReference>
<dbReference type="InterPro" id="IPR008854">
    <property type="entry name" value="TPMT"/>
</dbReference>
<dbReference type="NCBIfam" id="NF009732">
    <property type="entry name" value="PRK13255.1"/>
    <property type="match status" value="1"/>
</dbReference>
<dbReference type="NCBIfam" id="TIGR03840">
    <property type="entry name" value="TMPT_Se_Te"/>
    <property type="match status" value="1"/>
</dbReference>
<dbReference type="PANTHER" id="PTHR10259">
    <property type="entry name" value="THIOPURINE S-METHYLTRANSFERASE"/>
    <property type="match status" value="1"/>
</dbReference>
<dbReference type="PANTHER" id="PTHR10259:SF11">
    <property type="entry name" value="THIOPURINE S-METHYLTRANSFERASE"/>
    <property type="match status" value="1"/>
</dbReference>
<dbReference type="Pfam" id="PF05724">
    <property type="entry name" value="TPMT"/>
    <property type="match status" value="1"/>
</dbReference>
<dbReference type="PIRSF" id="PIRSF023956">
    <property type="entry name" value="Thiopurine_S-methyltransferase"/>
    <property type="match status" value="1"/>
</dbReference>
<dbReference type="SUPFAM" id="SSF53335">
    <property type="entry name" value="S-adenosyl-L-methionine-dependent methyltransferases"/>
    <property type="match status" value="1"/>
</dbReference>
<dbReference type="PROSITE" id="PS51585">
    <property type="entry name" value="SAM_MT_TPMT"/>
    <property type="match status" value="1"/>
</dbReference>
<evidence type="ECO:0000255" key="1">
    <source>
        <dbReference type="HAMAP-Rule" id="MF_00812"/>
    </source>
</evidence>